<accession>Q6CU02</accession>
<name>ATG15_KLULA</name>
<comment type="function">
    <text evidence="1">Lipase which is essential for lysis of subvacuolar cytoplasm to vacuole targeted bodies and intravacuolar autophagic bodies. Involved in the lysis of intravacuolar multivesicular body (MVB) vesicles. The intravacuolar membrane disintegration by ATG15 is critical to life span extension (By similarity).</text>
</comment>
<comment type="catalytic activity">
    <reaction>
        <text>a triacylglycerol + H2O = a diacylglycerol + a fatty acid + H(+)</text>
        <dbReference type="Rhea" id="RHEA:12044"/>
        <dbReference type="ChEBI" id="CHEBI:15377"/>
        <dbReference type="ChEBI" id="CHEBI:15378"/>
        <dbReference type="ChEBI" id="CHEBI:17855"/>
        <dbReference type="ChEBI" id="CHEBI:18035"/>
        <dbReference type="ChEBI" id="CHEBI:28868"/>
        <dbReference type="EC" id="3.1.1.3"/>
    </reaction>
</comment>
<comment type="subunit">
    <text evidence="1">Binds to both phosphatidylinositol (PI) and phosphatidylinositol 3,5-bisphosphate (PIP2).</text>
</comment>
<comment type="subcellular location">
    <subcellularLocation>
        <location evidence="2">Endosome</location>
        <location evidence="2">Multivesicular body membrane</location>
        <topology evidence="2">Single-pass type II membrane protein</topology>
    </subcellularLocation>
    <subcellularLocation>
        <location evidence="2">Prevacuolar compartment membrane</location>
        <topology evidence="2">Single-pass type II membrane protein</topology>
    </subcellularLocation>
    <text evidence="2">From ER, targeted to vacuolar lumen at the MVB vesicles via the Golgi and the prevacuolar compartment (PVC).</text>
</comment>
<comment type="similarity">
    <text evidence="6">Belongs to the AB hydrolase superfamily. Lipase family.</text>
</comment>
<protein>
    <recommendedName>
        <fullName>Putative lipase ATG15</fullName>
        <ecNumber>3.1.1.3</ecNumber>
    </recommendedName>
    <alternativeName>
        <fullName>Autophagy-related protein 15</fullName>
    </alternativeName>
</protein>
<sequence length="531" mass="58819">MKPGIKISKRYSARNASVITVLLLLIYLIYINKETIQTKYQGSRINHDSGGDSTKDKTHTFTIKEIHFRPLDEKTQSYGSLQVTPEFVNMAKSEFEQNVAVASGDNEDLYDKQLWSASIKSNPWTHQFTLKQGSIKMKRMVNRDPDYVESFLDYAHENPEMARKVHLDWVDESVLAPNVTDKETVISLALMSSNAYVRLPYEGDWRNLSDWNNDLNPDLSVGIGWDSDGVRGHIFSNDDSSVIVIALKGTSAQGLPGSGEDETTDNDKLNDNVLFSCCCARVSYLWKTACDCYVKSYTCDEKCLEQELVRKDRYYQAVLDIYRSVVTAHPNSAIWITGHSLGGALASLLGRTFGAPAVAFEAPGELLATKRLHLPMPPGLPAYQEGVWHIGHTADPIFMGTCNGASSSCSIAGYAMETSCHSGKVCVYDVVTDKGWHVNMLNHRIHTVIDGILTDYDTVAKCKTPDACHDCFNWNYVKGRDVPKKHKSSSSTASSTSAETSTLTVGPSPPEKTTTSCIGRNWIGICTEYGI</sequence>
<feature type="chain" id="PRO_0000090369" description="Putative lipase ATG15">
    <location>
        <begin position="1"/>
        <end position="531"/>
    </location>
</feature>
<feature type="topological domain" description="Cytoplasmic" evidence="3">
    <location>
        <begin position="1"/>
        <end position="11"/>
    </location>
</feature>
<feature type="transmembrane region" description="Helical; Signal-anchor for type II membrane protein" evidence="3">
    <location>
        <begin position="12"/>
        <end position="31"/>
    </location>
</feature>
<feature type="topological domain" description="Lumenal" evidence="3">
    <location>
        <begin position="32"/>
        <end position="531"/>
    </location>
</feature>
<feature type="region of interest" description="Disordered" evidence="5">
    <location>
        <begin position="482"/>
        <end position="513"/>
    </location>
</feature>
<feature type="compositionally biased region" description="Low complexity" evidence="5">
    <location>
        <begin position="489"/>
        <end position="502"/>
    </location>
</feature>
<feature type="active site" description="Charge relay system" evidence="4">
    <location>
        <position position="340"/>
    </location>
</feature>
<feature type="glycosylation site" description="N-linked (GlcNAc...) asparagine" evidence="3">
    <location>
        <position position="178"/>
    </location>
</feature>
<feature type="glycosylation site" description="N-linked (GlcNAc...) asparagine" evidence="3">
    <location>
        <position position="207"/>
    </location>
</feature>
<proteinExistence type="inferred from homology"/>
<reference key="1">
    <citation type="journal article" date="2004" name="Nature">
        <title>Genome evolution in yeasts.</title>
        <authorList>
            <person name="Dujon B."/>
            <person name="Sherman D."/>
            <person name="Fischer G."/>
            <person name="Durrens P."/>
            <person name="Casaregola S."/>
            <person name="Lafontaine I."/>
            <person name="de Montigny J."/>
            <person name="Marck C."/>
            <person name="Neuveglise C."/>
            <person name="Talla E."/>
            <person name="Goffard N."/>
            <person name="Frangeul L."/>
            <person name="Aigle M."/>
            <person name="Anthouard V."/>
            <person name="Babour A."/>
            <person name="Barbe V."/>
            <person name="Barnay S."/>
            <person name="Blanchin S."/>
            <person name="Beckerich J.-M."/>
            <person name="Beyne E."/>
            <person name="Bleykasten C."/>
            <person name="Boisrame A."/>
            <person name="Boyer J."/>
            <person name="Cattolico L."/>
            <person name="Confanioleri F."/>
            <person name="de Daruvar A."/>
            <person name="Despons L."/>
            <person name="Fabre E."/>
            <person name="Fairhead C."/>
            <person name="Ferry-Dumazet H."/>
            <person name="Groppi A."/>
            <person name="Hantraye F."/>
            <person name="Hennequin C."/>
            <person name="Jauniaux N."/>
            <person name="Joyet P."/>
            <person name="Kachouri R."/>
            <person name="Kerrest A."/>
            <person name="Koszul R."/>
            <person name="Lemaire M."/>
            <person name="Lesur I."/>
            <person name="Ma L."/>
            <person name="Muller H."/>
            <person name="Nicaud J.-M."/>
            <person name="Nikolski M."/>
            <person name="Oztas S."/>
            <person name="Ozier-Kalogeropoulos O."/>
            <person name="Pellenz S."/>
            <person name="Potier S."/>
            <person name="Richard G.-F."/>
            <person name="Straub M.-L."/>
            <person name="Suleau A."/>
            <person name="Swennen D."/>
            <person name="Tekaia F."/>
            <person name="Wesolowski-Louvel M."/>
            <person name="Westhof E."/>
            <person name="Wirth B."/>
            <person name="Zeniou-Meyer M."/>
            <person name="Zivanovic Y."/>
            <person name="Bolotin-Fukuhara M."/>
            <person name="Thierry A."/>
            <person name="Bouchier C."/>
            <person name="Caudron B."/>
            <person name="Scarpelli C."/>
            <person name="Gaillardin C."/>
            <person name="Weissenbach J."/>
            <person name="Wincker P."/>
            <person name="Souciet J.-L."/>
        </authorList>
    </citation>
    <scope>NUCLEOTIDE SEQUENCE [LARGE SCALE GENOMIC DNA]</scope>
    <source>
        <strain>ATCC 8585 / CBS 2359 / DSM 70799 / NBRC 1267 / NRRL Y-1140 / WM37</strain>
    </source>
</reference>
<evidence type="ECO:0000250" key="1"/>
<evidence type="ECO:0000250" key="2">
    <source>
        <dbReference type="UniProtKB" id="P25641"/>
    </source>
</evidence>
<evidence type="ECO:0000255" key="3"/>
<evidence type="ECO:0000255" key="4">
    <source>
        <dbReference type="PROSITE-ProRule" id="PRU10037"/>
    </source>
</evidence>
<evidence type="ECO:0000256" key="5">
    <source>
        <dbReference type="SAM" id="MobiDB-lite"/>
    </source>
</evidence>
<evidence type="ECO:0000305" key="6"/>
<gene>
    <name type="primary">ATG15</name>
    <name type="ordered locus">KLLA0C08679g</name>
</gene>
<keyword id="KW-0072">Autophagy</keyword>
<keyword id="KW-0967">Endosome</keyword>
<keyword id="KW-0325">Glycoprotein</keyword>
<keyword id="KW-0378">Hydrolase</keyword>
<keyword id="KW-0442">Lipid degradation</keyword>
<keyword id="KW-0443">Lipid metabolism</keyword>
<keyword id="KW-0472">Membrane</keyword>
<keyword id="KW-1185">Reference proteome</keyword>
<keyword id="KW-0735">Signal-anchor</keyword>
<keyword id="KW-0812">Transmembrane</keyword>
<keyword id="KW-1133">Transmembrane helix</keyword>
<organism>
    <name type="scientific">Kluyveromyces lactis (strain ATCC 8585 / CBS 2359 / DSM 70799 / NBRC 1267 / NRRL Y-1140 / WM37)</name>
    <name type="common">Yeast</name>
    <name type="synonym">Candida sphaerica</name>
    <dbReference type="NCBI Taxonomy" id="284590"/>
    <lineage>
        <taxon>Eukaryota</taxon>
        <taxon>Fungi</taxon>
        <taxon>Dikarya</taxon>
        <taxon>Ascomycota</taxon>
        <taxon>Saccharomycotina</taxon>
        <taxon>Saccharomycetes</taxon>
        <taxon>Saccharomycetales</taxon>
        <taxon>Saccharomycetaceae</taxon>
        <taxon>Kluyveromyces</taxon>
    </lineage>
</organism>
<dbReference type="EC" id="3.1.1.3"/>
<dbReference type="EMBL" id="CR382123">
    <property type="protein sequence ID" value="CAH01438.1"/>
    <property type="molecule type" value="Genomic_DNA"/>
</dbReference>
<dbReference type="RefSeq" id="XP_452587.1">
    <property type="nucleotide sequence ID" value="XM_452587.1"/>
</dbReference>
<dbReference type="FunCoup" id="Q6CU02">
    <property type="interactions" value="78"/>
</dbReference>
<dbReference type="STRING" id="284590.Q6CU02"/>
<dbReference type="ESTHER" id="klula-q6cu02">
    <property type="family name" value="ATG15-related-lipase"/>
</dbReference>
<dbReference type="GlyCosmos" id="Q6CU02">
    <property type="glycosylation" value="2 sites, No reported glycans"/>
</dbReference>
<dbReference type="PaxDb" id="284590-Q6CU02"/>
<dbReference type="KEGG" id="kla:KLLA0_C08679g"/>
<dbReference type="eggNOG" id="KOG4540">
    <property type="taxonomic scope" value="Eukaryota"/>
</dbReference>
<dbReference type="HOGENOM" id="CLU_028295_0_2_1"/>
<dbReference type="InParanoid" id="Q6CU02"/>
<dbReference type="OMA" id="CHDCYNW"/>
<dbReference type="Proteomes" id="UP000000598">
    <property type="component" value="Chromosome C"/>
</dbReference>
<dbReference type="GO" id="GO:0032585">
    <property type="term" value="C:multivesicular body membrane"/>
    <property type="evidence" value="ECO:0007669"/>
    <property type="project" value="UniProtKB-SubCell"/>
</dbReference>
<dbReference type="GO" id="GO:0005775">
    <property type="term" value="C:vacuolar lumen"/>
    <property type="evidence" value="ECO:0007669"/>
    <property type="project" value="TreeGrafter"/>
</dbReference>
<dbReference type="GO" id="GO:0004620">
    <property type="term" value="F:phospholipase activity"/>
    <property type="evidence" value="ECO:0007669"/>
    <property type="project" value="TreeGrafter"/>
</dbReference>
<dbReference type="GO" id="GO:0004806">
    <property type="term" value="F:triacylglycerol lipase activity"/>
    <property type="evidence" value="ECO:0007669"/>
    <property type="project" value="UniProtKB-EC"/>
</dbReference>
<dbReference type="GO" id="GO:0034496">
    <property type="term" value="P:multivesicular body membrane disassembly"/>
    <property type="evidence" value="ECO:0007669"/>
    <property type="project" value="TreeGrafter"/>
</dbReference>
<dbReference type="GO" id="GO:0046461">
    <property type="term" value="P:neutral lipid catabolic process"/>
    <property type="evidence" value="ECO:0007669"/>
    <property type="project" value="TreeGrafter"/>
</dbReference>
<dbReference type="GO" id="GO:0006660">
    <property type="term" value="P:phosphatidylserine catabolic process"/>
    <property type="evidence" value="ECO:0007669"/>
    <property type="project" value="TreeGrafter"/>
</dbReference>
<dbReference type="GO" id="GO:0034727">
    <property type="term" value="P:piecemeal microautophagy of the nucleus"/>
    <property type="evidence" value="ECO:0007669"/>
    <property type="project" value="TreeGrafter"/>
</dbReference>
<dbReference type="CDD" id="cd00519">
    <property type="entry name" value="Lipase_3"/>
    <property type="match status" value="1"/>
</dbReference>
<dbReference type="Gene3D" id="3.40.50.1820">
    <property type="entry name" value="alpha/beta hydrolase"/>
    <property type="match status" value="1"/>
</dbReference>
<dbReference type="InterPro" id="IPR029058">
    <property type="entry name" value="AB_hydrolase_fold"/>
</dbReference>
<dbReference type="InterPro" id="IPR050805">
    <property type="entry name" value="ATG15_Lipase"/>
</dbReference>
<dbReference type="InterPro" id="IPR002921">
    <property type="entry name" value="Fungal_lipase-type"/>
</dbReference>
<dbReference type="PANTHER" id="PTHR47175">
    <property type="entry name" value="LIPASE ATG15-RELATED"/>
    <property type="match status" value="1"/>
</dbReference>
<dbReference type="PANTHER" id="PTHR47175:SF2">
    <property type="entry name" value="LIPASE ATG15-RELATED"/>
    <property type="match status" value="1"/>
</dbReference>
<dbReference type="Pfam" id="PF01764">
    <property type="entry name" value="Lipase_3"/>
    <property type="match status" value="1"/>
</dbReference>
<dbReference type="SUPFAM" id="SSF53474">
    <property type="entry name" value="alpha/beta-Hydrolases"/>
    <property type="match status" value="1"/>
</dbReference>
<dbReference type="PROSITE" id="PS00120">
    <property type="entry name" value="LIPASE_SER"/>
    <property type="match status" value="1"/>
</dbReference>